<proteinExistence type="evidence at transcript level"/>
<accession>O77736</accession>
<sequence>MSGIWVLLSLVFTCIAGPLSKGDDAQVTDPDSEMVKLNITKRESECPEGQHREGQFCCQPCPPGKRKHADCTSPGGAPQCVPCSEGEDYTDKNHHSSKCRRCRVCDGEHGLEVEKNCTRTQNTKCRCKPNFFCHTSQCEHCNPCTTCEHGVIENCTPTSNTKCREVFQSAGSRSNLHWLWALLILIPVPALVYREVKRRCRRKENGYQKPITSNAEEVPMIKDVDLGKYITRIAEQMKITEVKDFVRKNGIEETKIDEIMHDNPKDTAEQKVQLLRNWYLYHGKKDAYCTLIQGLRKAKLSALADKINDIVQKDVTSEQENANSQNENESLT</sequence>
<organism>
    <name type="scientific">Sus scrofa</name>
    <name type="common">Pig</name>
    <dbReference type="NCBI Taxonomy" id="9823"/>
    <lineage>
        <taxon>Eukaryota</taxon>
        <taxon>Metazoa</taxon>
        <taxon>Chordata</taxon>
        <taxon>Craniata</taxon>
        <taxon>Vertebrata</taxon>
        <taxon>Euteleostomi</taxon>
        <taxon>Mammalia</taxon>
        <taxon>Eutheria</taxon>
        <taxon>Laurasiatheria</taxon>
        <taxon>Artiodactyla</taxon>
        <taxon>Suina</taxon>
        <taxon>Suidae</taxon>
        <taxon>Sus</taxon>
    </lineage>
</organism>
<comment type="function">
    <text evidence="2">Receptor for TNFSF6/FASLG. The adapter molecule FADD recruits caspase CASP8 to the activated receptor. The resulting death-inducing signaling complex (DISC) performs CASP8 proteolytic activation which initiates the subsequent cascade of caspases (aspartate-specific cysteine proteases) mediating apoptosis. FAS-mediated apoptosis may have a role in the induction of peripheral tolerance, in the antigen-stimulated suicide of mature T-cells, or both (By similarity).</text>
</comment>
<comment type="subunit">
    <text evidence="2 3">Component of the death-induced signaling complex (DISC) composed of cell surface receptor FAS/CD95, adapter protein FADD and the CASP8 protease; recruitment of CASP8 to the complex is required for processing of CASP8 into the p18 and p10 subunits (By similarity). Interacts directly (via DED domain) with NOL3 (via CARD domain); inhibits death-inducing signaling complex (DISC) assembly by inhibiting the increase in FAS-FADD binding induced by FAS activation (By similarity). Binds DAXX. Interacts with HIPK3 (By similarity). Part of a complex containing HIPK3 and FADD (By similarity). Binds RIPK1 and FAIM2. Interacts with BABAM2 and FEM1B. Interacts with CALM (By similarity). In the absence of stimulation, interacts with BIRC2, DDX3X and GSK3B. The interaction with BIRC2 and DDX3X is further enhanced upon receptor stimulation and accompanied by DDX3X and BIRC2 cleavage (By similarity).</text>
</comment>
<comment type="subcellular location">
    <subcellularLocation>
        <location evidence="4">Cell membrane</location>
        <topology evidence="4">Single-pass type I membrane protein</topology>
    </subcellularLocation>
    <subcellularLocation>
        <location evidence="2">Membrane raft</location>
    </subcellularLocation>
</comment>
<comment type="domain">
    <text>Contains a death domain involved in the binding of FADD, and maybe to other cytosolic adapter proteins.</text>
</comment>
<comment type="PTM">
    <text evidence="2">Palmitoylated. Palmitoylation by ZDHHC7 prevents the lysosomal degradation of FAS regulating its expression at the plasma membrane.</text>
</comment>
<protein>
    <recommendedName>
        <fullName>Tumor necrosis factor receptor superfamily member 6</fullName>
    </recommendedName>
    <alternativeName>
        <fullName>Apo-1 antigen</fullName>
    </alternativeName>
    <alternativeName>
        <fullName>Apoptosis-mediating surface antigen FAS</fullName>
    </alternativeName>
    <alternativeName>
        <fullName>FASLG receptor</fullName>
    </alternativeName>
    <cdAntigenName>CD95</cdAntigenName>
</protein>
<keyword id="KW-0053">Apoptosis</keyword>
<keyword id="KW-0112">Calmodulin-binding</keyword>
<keyword id="KW-1003">Cell membrane</keyword>
<keyword id="KW-1015">Disulfide bond</keyword>
<keyword id="KW-0325">Glycoprotein</keyword>
<keyword id="KW-0449">Lipoprotein</keyword>
<keyword id="KW-0472">Membrane</keyword>
<keyword id="KW-0564">Palmitate</keyword>
<keyword id="KW-0597">Phosphoprotein</keyword>
<keyword id="KW-0675">Receptor</keyword>
<keyword id="KW-1185">Reference proteome</keyword>
<keyword id="KW-0677">Repeat</keyword>
<keyword id="KW-0732">Signal</keyword>
<keyword id="KW-0812">Transmembrane</keyword>
<keyword id="KW-1133">Transmembrane helix</keyword>
<dbReference type="EMBL" id="AJ001202">
    <property type="protein sequence ID" value="CAA04596.1"/>
    <property type="molecule type" value="mRNA"/>
</dbReference>
<dbReference type="RefSeq" id="NP_999004.1">
    <property type="nucleotide sequence ID" value="NM_213839.1"/>
</dbReference>
<dbReference type="SMR" id="O77736"/>
<dbReference type="FunCoup" id="O77736">
    <property type="interactions" value="415"/>
</dbReference>
<dbReference type="STRING" id="9823.ENSSSCP00000064626"/>
<dbReference type="GlyCosmos" id="O77736">
    <property type="glycosylation" value="2 sites, No reported glycans"/>
</dbReference>
<dbReference type="GlyGen" id="O77736">
    <property type="glycosylation" value="2 sites"/>
</dbReference>
<dbReference type="PaxDb" id="9823-ENSSSCP00000011136"/>
<dbReference type="PeptideAtlas" id="O77736"/>
<dbReference type="Ensembl" id="ENSSSCT00030039189.1">
    <property type="protein sequence ID" value="ENSSSCP00030018041.1"/>
    <property type="gene ID" value="ENSSSCG00030028016.1"/>
</dbReference>
<dbReference type="Ensembl" id="ENSSSCT00040069888.1">
    <property type="protein sequence ID" value="ENSSSCP00040029785.1"/>
    <property type="gene ID" value="ENSSSCG00040051682.1"/>
</dbReference>
<dbReference type="Ensembl" id="ENSSSCT00045044622.1">
    <property type="protein sequence ID" value="ENSSSCP00045030948.1"/>
    <property type="gene ID" value="ENSSSCG00045026098.1"/>
</dbReference>
<dbReference type="Ensembl" id="ENSSSCT00050030167.1">
    <property type="protein sequence ID" value="ENSSSCP00050012547.1"/>
    <property type="gene ID" value="ENSSSCG00050022352.1"/>
</dbReference>
<dbReference type="Ensembl" id="ENSSSCT00060029683.1">
    <property type="protein sequence ID" value="ENSSSCP00060012745.1"/>
    <property type="gene ID" value="ENSSSCG00060021879.1"/>
</dbReference>
<dbReference type="Ensembl" id="ENSSSCT00110040249">
    <property type="protein sequence ID" value="ENSSSCP00110028041"/>
    <property type="gene ID" value="ENSSSCG00110020820"/>
</dbReference>
<dbReference type="GeneID" id="396826"/>
<dbReference type="KEGG" id="ssc:396826"/>
<dbReference type="CTD" id="355"/>
<dbReference type="eggNOG" id="ENOG502S0SV">
    <property type="taxonomic scope" value="Eukaryota"/>
</dbReference>
<dbReference type="InParanoid" id="O77736"/>
<dbReference type="OrthoDB" id="8848202at2759"/>
<dbReference type="Reactome" id="R-SSC-3371378">
    <property type="pathway name" value="Regulation by c-FLIP"/>
</dbReference>
<dbReference type="Reactome" id="R-SSC-5218900">
    <property type="pathway name" value="CASP8 activity is inhibited"/>
</dbReference>
<dbReference type="Reactome" id="R-SSC-69416">
    <property type="pathway name" value="Dimerization of procaspase-8"/>
</dbReference>
<dbReference type="Reactome" id="R-SSC-75157">
    <property type="pathway name" value="FasL/ CD95L signaling"/>
</dbReference>
<dbReference type="Proteomes" id="UP000008227">
    <property type="component" value="Unplaced"/>
</dbReference>
<dbReference type="Proteomes" id="UP000314985">
    <property type="component" value="Unplaced"/>
</dbReference>
<dbReference type="Proteomes" id="UP000694570">
    <property type="component" value="Unplaced"/>
</dbReference>
<dbReference type="Proteomes" id="UP000694571">
    <property type="component" value="Unplaced"/>
</dbReference>
<dbReference type="Proteomes" id="UP000694720">
    <property type="component" value="Unplaced"/>
</dbReference>
<dbReference type="Proteomes" id="UP000694722">
    <property type="component" value="Unplaced"/>
</dbReference>
<dbReference type="Proteomes" id="UP000694723">
    <property type="component" value="Unplaced"/>
</dbReference>
<dbReference type="Proteomes" id="UP000694724">
    <property type="component" value="Unplaced"/>
</dbReference>
<dbReference type="Proteomes" id="UP000694725">
    <property type="component" value="Unplaced"/>
</dbReference>
<dbReference type="Proteomes" id="UP000694726">
    <property type="component" value="Unplaced"/>
</dbReference>
<dbReference type="Proteomes" id="UP000694727">
    <property type="component" value="Unplaced"/>
</dbReference>
<dbReference type="Proteomes" id="UP000694728">
    <property type="component" value="Unplaced"/>
</dbReference>
<dbReference type="GO" id="GO:0031265">
    <property type="term" value="C:CD95 death-inducing signaling complex"/>
    <property type="evidence" value="ECO:0000318"/>
    <property type="project" value="GO_Central"/>
</dbReference>
<dbReference type="GO" id="GO:0009897">
    <property type="term" value="C:external side of plasma membrane"/>
    <property type="evidence" value="ECO:0000318"/>
    <property type="project" value="GO_Central"/>
</dbReference>
<dbReference type="GO" id="GO:0045121">
    <property type="term" value="C:membrane raft"/>
    <property type="evidence" value="ECO:0000318"/>
    <property type="project" value="GO_Central"/>
</dbReference>
<dbReference type="GO" id="GO:0005516">
    <property type="term" value="F:calmodulin binding"/>
    <property type="evidence" value="ECO:0000250"/>
    <property type="project" value="UniProtKB"/>
</dbReference>
<dbReference type="GO" id="GO:0005031">
    <property type="term" value="F:tumor necrosis factor receptor activity"/>
    <property type="evidence" value="ECO:0000318"/>
    <property type="project" value="GO_Central"/>
</dbReference>
<dbReference type="GO" id="GO:0006924">
    <property type="term" value="P:activation-induced cell death of T cells"/>
    <property type="evidence" value="ECO:0000318"/>
    <property type="project" value="GO_Central"/>
</dbReference>
<dbReference type="GO" id="GO:0006955">
    <property type="term" value="P:immune response"/>
    <property type="evidence" value="ECO:0007669"/>
    <property type="project" value="InterPro"/>
</dbReference>
<dbReference type="GO" id="GO:0097049">
    <property type="term" value="P:motor neuron apoptotic process"/>
    <property type="evidence" value="ECO:0000318"/>
    <property type="project" value="GO_Central"/>
</dbReference>
<dbReference type="GO" id="GO:0097527">
    <property type="term" value="P:necroptotic signaling pathway"/>
    <property type="evidence" value="ECO:0000318"/>
    <property type="project" value="GO_Central"/>
</dbReference>
<dbReference type="GO" id="GO:0043066">
    <property type="term" value="P:negative regulation of apoptotic process"/>
    <property type="evidence" value="ECO:0000318"/>
    <property type="project" value="GO_Central"/>
</dbReference>
<dbReference type="GO" id="GO:0032872">
    <property type="term" value="P:regulation of stress-activated MAPK cascade"/>
    <property type="evidence" value="ECO:0000318"/>
    <property type="project" value="GO_Central"/>
</dbReference>
<dbReference type="CDD" id="cd08316">
    <property type="entry name" value="Death_FAS_TNFRSF6"/>
    <property type="match status" value="1"/>
</dbReference>
<dbReference type="CDD" id="cd10579">
    <property type="entry name" value="TNFRSF6"/>
    <property type="match status" value="1"/>
</dbReference>
<dbReference type="FunFam" id="1.10.533.10:FF:000057">
    <property type="entry name" value="Tumor necrosis factor receptor superfamily member 6"/>
    <property type="match status" value="1"/>
</dbReference>
<dbReference type="FunFam" id="2.10.50.10:FF:000021">
    <property type="entry name" value="Tumor necrosis factor receptor superfamily member 6"/>
    <property type="match status" value="1"/>
</dbReference>
<dbReference type="Gene3D" id="1.10.533.10">
    <property type="entry name" value="Death Domain, Fas"/>
    <property type="match status" value="1"/>
</dbReference>
<dbReference type="Gene3D" id="2.10.50.10">
    <property type="entry name" value="Tumor Necrosis Factor Receptor, subunit A, domain 2"/>
    <property type="match status" value="2"/>
</dbReference>
<dbReference type="InterPro" id="IPR011029">
    <property type="entry name" value="DEATH-like_dom_sf"/>
</dbReference>
<dbReference type="InterPro" id="IPR000488">
    <property type="entry name" value="Death_dom"/>
</dbReference>
<dbReference type="InterPro" id="IPR008063">
    <property type="entry name" value="Fas_rcpt"/>
</dbReference>
<dbReference type="InterPro" id="IPR001368">
    <property type="entry name" value="TNFR/NGFR_Cys_rich_reg"/>
</dbReference>
<dbReference type="InterPro" id="IPR033998">
    <property type="entry name" value="TNFRSF6_death"/>
</dbReference>
<dbReference type="InterPro" id="IPR033999">
    <property type="entry name" value="TNFRSF6_N"/>
</dbReference>
<dbReference type="PANTHER" id="PTHR46874">
    <property type="entry name" value="TUMOR NECROSIS FACTOR RECEPTOR SUPERFAMILY MEMBER 6"/>
    <property type="match status" value="1"/>
</dbReference>
<dbReference type="PANTHER" id="PTHR46874:SF1">
    <property type="entry name" value="TUMOR NECROSIS FACTOR RECEPTOR SUPERFAMILY MEMBER 6"/>
    <property type="match status" value="1"/>
</dbReference>
<dbReference type="Pfam" id="PF00531">
    <property type="entry name" value="Death"/>
    <property type="match status" value="1"/>
</dbReference>
<dbReference type="Pfam" id="PF00020">
    <property type="entry name" value="TNFR_c6"/>
    <property type="match status" value="2"/>
</dbReference>
<dbReference type="PRINTS" id="PR01680">
    <property type="entry name" value="TNFACTORR6"/>
</dbReference>
<dbReference type="SMART" id="SM00005">
    <property type="entry name" value="DEATH"/>
    <property type="match status" value="1"/>
</dbReference>
<dbReference type="SMART" id="SM00208">
    <property type="entry name" value="TNFR"/>
    <property type="match status" value="3"/>
</dbReference>
<dbReference type="SUPFAM" id="SSF47986">
    <property type="entry name" value="DEATH domain"/>
    <property type="match status" value="1"/>
</dbReference>
<dbReference type="SUPFAM" id="SSF57586">
    <property type="entry name" value="TNF receptor-like"/>
    <property type="match status" value="2"/>
</dbReference>
<dbReference type="PROSITE" id="PS50017">
    <property type="entry name" value="DEATH_DOMAIN"/>
    <property type="match status" value="1"/>
</dbReference>
<dbReference type="PROSITE" id="PS00652">
    <property type="entry name" value="TNFR_NGFR_1"/>
    <property type="match status" value="2"/>
</dbReference>
<dbReference type="PROSITE" id="PS50050">
    <property type="entry name" value="TNFR_NGFR_2"/>
    <property type="match status" value="2"/>
</dbReference>
<feature type="signal peptide" evidence="5">
    <location>
        <begin position="1"/>
        <end position="16"/>
    </location>
</feature>
<feature type="chain" id="PRO_0000034568" description="Tumor necrosis factor receptor superfamily member 6">
    <location>
        <begin position="17"/>
        <end position="332"/>
    </location>
</feature>
<feature type="topological domain" description="Extracellular" evidence="5">
    <location>
        <begin position="17"/>
        <end position="175"/>
    </location>
</feature>
<feature type="transmembrane region" description="Helical" evidence="5">
    <location>
        <begin position="176"/>
        <end position="192"/>
    </location>
</feature>
<feature type="topological domain" description="Cytoplasmic" evidence="5">
    <location>
        <begin position="193"/>
        <end position="332"/>
    </location>
</feature>
<feature type="repeat" description="TNFR-Cys 1">
    <location>
        <begin position="45"/>
        <end position="81"/>
    </location>
</feature>
<feature type="repeat" description="TNFR-Cys 2">
    <location>
        <begin position="82"/>
        <end position="125"/>
    </location>
</feature>
<feature type="repeat" description="TNFR-Cys 3">
    <location>
        <begin position="126"/>
        <end position="164"/>
    </location>
</feature>
<feature type="domain" description="Death" evidence="6">
    <location>
        <begin position="227"/>
        <end position="311"/>
    </location>
</feature>
<feature type="region of interest" description="Interaction with HIPK3" evidence="1">
    <location>
        <begin position="210"/>
        <end position="314"/>
    </location>
</feature>
<feature type="region of interest" description="Interaction with CALM" evidence="2">
    <location>
        <begin position="227"/>
        <end position="251"/>
    </location>
</feature>
<feature type="modified residue" description="Phosphothreonine" evidence="3">
    <location>
        <position position="212"/>
    </location>
</feature>
<feature type="lipid moiety-binding region" description="S-palmitoyl cysteine" evidence="2">
    <location>
        <position position="200"/>
    </location>
</feature>
<feature type="glycosylation site" description="N-linked (GlcNAc...) asparagine" evidence="5">
    <location>
        <position position="38"/>
    </location>
</feature>
<feature type="glycosylation site" description="N-linked (GlcNAc...) asparagine" evidence="5">
    <location>
        <position position="116"/>
    </location>
</feature>
<feature type="disulfide bond" evidence="7">
    <location>
        <begin position="46"/>
        <end position="57"/>
    </location>
</feature>
<feature type="disulfide bond" evidence="7">
    <location>
        <begin position="58"/>
        <end position="71"/>
    </location>
</feature>
<feature type="disulfide bond" evidence="7">
    <location>
        <begin position="61"/>
        <end position="80"/>
    </location>
</feature>
<feature type="disulfide bond" evidence="7">
    <location>
        <begin position="83"/>
        <end position="99"/>
    </location>
</feature>
<feature type="disulfide bond" evidence="7">
    <location>
        <begin position="102"/>
        <end position="117"/>
    </location>
</feature>
<feature type="disulfide bond" evidence="7">
    <location>
        <begin position="105"/>
        <end position="125"/>
    </location>
</feature>
<feature type="disulfide bond" evidence="7">
    <location>
        <begin position="127"/>
        <end position="141"/>
    </location>
</feature>
<feature type="disulfide bond" evidence="7">
    <location>
        <begin position="144"/>
        <end position="155"/>
    </location>
</feature>
<feature type="disulfide bond" evidence="7">
    <location>
        <begin position="147"/>
        <end position="163"/>
    </location>
</feature>
<gene>
    <name type="primary">FAS</name>
    <name type="synonym">APT1</name>
    <name type="synonym">TNFRSF6</name>
</gene>
<name>TNR6_PIG</name>
<evidence type="ECO:0000250" key="1"/>
<evidence type="ECO:0000250" key="2">
    <source>
        <dbReference type="UniProtKB" id="P25445"/>
    </source>
</evidence>
<evidence type="ECO:0000250" key="3">
    <source>
        <dbReference type="UniProtKB" id="P25446"/>
    </source>
</evidence>
<evidence type="ECO:0000250" key="4">
    <source>
        <dbReference type="UniProtKB" id="P51867"/>
    </source>
</evidence>
<evidence type="ECO:0000255" key="5"/>
<evidence type="ECO:0000255" key="6">
    <source>
        <dbReference type="PROSITE-ProRule" id="PRU00064"/>
    </source>
</evidence>
<evidence type="ECO:0000255" key="7">
    <source>
        <dbReference type="PROSITE-ProRule" id="PRU00206"/>
    </source>
</evidence>
<reference key="1">
    <citation type="submission" date="1998-01" db="EMBL/GenBank/DDBJ databases">
        <title>Expression of apoptosis-associated genes in hibernating and stunned myocardium of pig.</title>
        <authorList>
            <person name="Bartling B."/>
            <person name="Hoffmann J."/>
            <person name="Holtz J."/>
            <person name="Schulz R."/>
            <person name="Heusch G."/>
            <person name="Darmer D."/>
        </authorList>
    </citation>
    <scope>NUCLEOTIDE SEQUENCE [MRNA]</scope>
</reference>